<name>CCKNA_XENLA</name>
<feature type="signal peptide" evidence="2">
    <location>
        <begin position="1"/>
        <end position="20"/>
    </location>
</feature>
<feature type="propeptide" id="PRO_0000010603" evidence="2">
    <location>
        <begin position="21"/>
        <end position="103"/>
    </location>
</feature>
<feature type="peptide" id="PRO_0000010604" description="Cholecystokinin">
    <location>
        <begin position="104"/>
        <end position="111"/>
    </location>
</feature>
<feature type="propeptide" id="PRO_0000010605" evidence="2">
    <location>
        <begin position="115"/>
        <end position="123"/>
    </location>
</feature>
<feature type="modified residue" description="Sulfotyrosine" evidence="1">
    <location>
        <position position="105"/>
    </location>
</feature>
<feature type="modified residue" description="Phenylalanine amide" evidence="1">
    <location>
        <position position="111"/>
    </location>
</feature>
<accession>P50144</accession>
<accession>B7ZQP7</accession>
<keyword id="KW-0027">Amidation</keyword>
<keyword id="KW-0165">Cleavage on pair of basic residues</keyword>
<keyword id="KW-0372">Hormone</keyword>
<keyword id="KW-1185">Reference proteome</keyword>
<keyword id="KW-0964">Secreted</keyword>
<keyword id="KW-0732">Signal</keyword>
<keyword id="KW-0765">Sulfation</keyword>
<sequence length="123" mass="13943">MYSGICICLLLAMLSASSKAHQSEDAVVTEMDQLTLSQLPRYARASSAGQKKSFQRTDGDQRSNIGNVLVKYLQQSRKAGPSGRYVVLPNRPIFDQPHRINDRDYMGWMDFGRRSAEEYEYSS</sequence>
<evidence type="ECO:0000250" key="1"/>
<evidence type="ECO:0000255" key="2"/>
<evidence type="ECO:0000305" key="3"/>
<comment type="subcellular location">
    <subcellularLocation>
        <location evidence="1">Secreted</location>
    </subcellularLocation>
</comment>
<comment type="tissue specificity">
    <text>Brain, gastrointestinal tract and lung.</text>
</comment>
<comment type="PTM">
    <text evidence="1">The precursor is cleaved by proteases to produce a number of active cholecystokinins.</text>
</comment>
<comment type="similarity">
    <text evidence="3">Belongs to the gastrin/cholecystokinin family.</text>
</comment>
<proteinExistence type="evidence at transcript level"/>
<protein>
    <recommendedName>
        <fullName>Cholecystokinin A</fullName>
    </recommendedName>
    <alternativeName>
        <fullName>Cholecystokinin type 1</fullName>
    </alternativeName>
    <component>
        <recommendedName>
            <fullName>Cholecystokinin</fullName>
            <shortName>CCK</shortName>
        </recommendedName>
    </component>
</protein>
<organism>
    <name type="scientific">Xenopus laevis</name>
    <name type="common">African clawed frog</name>
    <dbReference type="NCBI Taxonomy" id="8355"/>
    <lineage>
        <taxon>Eukaryota</taxon>
        <taxon>Metazoa</taxon>
        <taxon>Chordata</taxon>
        <taxon>Craniata</taxon>
        <taxon>Vertebrata</taxon>
        <taxon>Euteleostomi</taxon>
        <taxon>Amphibia</taxon>
        <taxon>Batrachia</taxon>
        <taxon>Anura</taxon>
        <taxon>Pipoidea</taxon>
        <taxon>Pipidae</taxon>
        <taxon>Xenopodinae</taxon>
        <taxon>Xenopus</taxon>
        <taxon>Xenopus</taxon>
    </lineage>
</organism>
<gene>
    <name type="primary">cck-a</name>
</gene>
<dbReference type="EMBL" id="Z47557">
    <property type="protein sequence ID" value="CAA87638.1"/>
    <property type="molecule type" value="mRNA"/>
</dbReference>
<dbReference type="EMBL" id="BC169884">
    <property type="protein sequence ID" value="AAI69884.1"/>
    <property type="molecule type" value="mRNA"/>
</dbReference>
<dbReference type="EMBL" id="BC170160">
    <property type="protein sequence ID" value="AAI70160.1"/>
    <property type="molecule type" value="mRNA"/>
</dbReference>
<dbReference type="PIR" id="I51604">
    <property type="entry name" value="I51604"/>
</dbReference>
<dbReference type="RefSeq" id="NP_001079303.1">
    <property type="nucleotide sequence ID" value="NM_001085834.1"/>
</dbReference>
<dbReference type="GeneID" id="378611"/>
<dbReference type="KEGG" id="xla:378611"/>
<dbReference type="AGR" id="Xenbase:XB-GENE-6252398"/>
<dbReference type="CTD" id="378611"/>
<dbReference type="Xenbase" id="XB-GENE-6252398">
    <property type="gene designation" value="cck.S"/>
</dbReference>
<dbReference type="OMA" id="IFDQPHR"/>
<dbReference type="OrthoDB" id="9862982at2759"/>
<dbReference type="Proteomes" id="UP000186698">
    <property type="component" value="Chromosome 6S"/>
</dbReference>
<dbReference type="Bgee" id="378611">
    <property type="expression patterns" value="Expressed in brain and 6 other cell types or tissues"/>
</dbReference>
<dbReference type="GO" id="GO:0030424">
    <property type="term" value="C:axon"/>
    <property type="evidence" value="ECO:0000318"/>
    <property type="project" value="GO_Central"/>
</dbReference>
<dbReference type="GO" id="GO:0005615">
    <property type="term" value="C:extracellular space"/>
    <property type="evidence" value="ECO:0000318"/>
    <property type="project" value="GO_Central"/>
</dbReference>
<dbReference type="GO" id="GO:0005184">
    <property type="term" value="F:neuropeptide hormone activity"/>
    <property type="evidence" value="ECO:0000318"/>
    <property type="project" value="GO_Central"/>
</dbReference>
<dbReference type="GO" id="GO:0007586">
    <property type="term" value="P:digestion"/>
    <property type="evidence" value="ECO:0000318"/>
    <property type="project" value="GO_Central"/>
</dbReference>
<dbReference type="InterPro" id="IPR015499">
    <property type="entry name" value="CCK-like"/>
</dbReference>
<dbReference type="InterPro" id="IPR001651">
    <property type="entry name" value="Gastrin/CCK"/>
</dbReference>
<dbReference type="InterPro" id="IPR013152">
    <property type="entry name" value="Gastrin/cholecystokinin_CS"/>
</dbReference>
<dbReference type="PANTHER" id="PTHR10786">
    <property type="entry name" value="CHOLECYSTOKININ"/>
    <property type="match status" value="1"/>
</dbReference>
<dbReference type="PANTHER" id="PTHR10786:SF0">
    <property type="entry name" value="CHOLECYSTOKININ"/>
    <property type="match status" value="1"/>
</dbReference>
<dbReference type="Pfam" id="PF00918">
    <property type="entry name" value="Gastrin"/>
    <property type="match status" value="1"/>
</dbReference>
<dbReference type="SMART" id="SM00029">
    <property type="entry name" value="GASTRIN"/>
    <property type="match status" value="1"/>
</dbReference>
<dbReference type="PROSITE" id="PS00259">
    <property type="entry name" value="GASTRIN"/>
    <property type="match status" value="1"/>
</dbReference>
<reference key="1">
    <citation type="journal article" date="1995" name="J. Mol. Endocrinol.">
        <title>Structure of two cDNAs encoding cholecystokinin precursors from the brain of Xenopus laevis.</title>
        <authorList>
            <person name="Wechselberger C."/>
            <person name="Kreil G."/>
        </authorList>
    </citation>
    <scope>NUCLEOTIDE SEQUENCE [MRNA]</scope>
    <source>
        <tissue>Brain</tissue>
    </source>
</reference>
<reference key="2">
    <citation type="submission" date="2008-11" db="EMBL/GenBank/DDBJ databases">
        <authorList>
            <consortium name="NIH - Xenopus Gene Collection (XGC) project"/>
        </authorList>
    </citation>
    <scope>NUCLEOTIDE SEQUENCE [LARGE SCALE MRNA]</scope>
</reference>